<reference key="1">
    <citation type="journal article" date="2011" name="J. Bacteriol.">
        <title>Comparative genomics of 28 Salmonella enterica isolates: evidence for CRISPR-mediated adaptive sublineage evolution.</title>
        <authorList>
            <person name="Fricke W.F."/>
            <person name="Mammel M.K."/>
            <person name="McDermott P.F."/>
            <person name="Tartera C."/>
            <person name="White D.G."/>
            <person name="Leclerc J.E."/>
            <person name="Ravel J."/>
            <person name="Cebula T.A."/>
        </authorList>
    </citation>
    <scope>NUCLEOTIDE SEQUENCE [LARGE SCALE GENOMIC DNA]</scope>
    <source>
        <strain>SL254</strain>
    </source>
</reference>
<feature type="chain" id="PRO_1000092156" description="Sulfate adenylyltransferase subunit 1">
    <location>
        <begin position="1"/>
        <end position="479"/>
    </location>
</feature>
<feature type="domain" description="tr-type G">
    <location>
        <begin position="25"/>
        <end position="239"/>
    </location>
</feature>
<feature type="region of interest" description="G1" evidence="1">
    <location>
        <begin position="34"/>
        <end position="41"/>
    </location>
</feature>
<feature type="region of interest" description="G2" evidence="1">
    <location>
        <begin position="92"/>
        <end position="96"/>
    </location>
</feature>
<feature type="region of interest" description="G3" evidence="1">
    <location>
        <begin position="113"/>
        <end position="116"/>
    </location>
</feature>
<feature type="region of interest" description="G4" evidence="1">
    <location>
        <begin position="168"/>
        <end position="171"/>
    </location>
</feature>
<feature type="region of interest" description="G5" evidence="1">
    <location>
        <begin position="206"/>
        <end position="208"/>
    </location>
</feature>
<feature type="binding site" evidence="2">
    <location>
        <begin position="34"/>
        <end position="41"/>
    </location>
    <ligand>
        <name>GTP</name>
        <dbReference type="ChEBI" id="CHEBI:37565"/>
    </ligand>
</feature>
<feature type="binding site" evidence="2">
    <location>
        <begin position="113"/>
        <end position="117"/>
    </location>
    <ligand>
        <name>GTP</name>
        <dbReference type="ChEBI" id="CHEBI:37565"/>
    </ligand>
</feature>
<feature type="binding site" evidence="2">
    <location>
        <begin position="168"/>
        <end position="171"/>
    </location>
    <ligand>
        <name>GTP</name>
        <dbReference type="ChEBI" id="CHEBI:37565"/>
    </ligand>
</feature>
<dbReference type="EC" id="2.7.7.4" evidence="2"/>
<dbReference type="EMBL" id="CP001113">
    <property type="protein sequence ID" value="ACF61272.1"/>
    <property type="molecule type" value="Genomic_DNA"/>
</dbReference>
<dbReference type="RefSeq" id="WP_001092268.1">
    <property type="nucleotide sequence ID" value="NZ_CCMR01000001.1"/>
</dbReference>
<dbReference type="SMR" id="B4T461"/>
<dbReference type="KEGG" id="see:SNSL254_A3140"/>
<dbReference type="HOGENOM" id="CLU_007265_5_2_6"/>
<dbReference type="UniPathway" id="UPA00140">
    <property type="reaction ID" value="UER00204"/>
</dbReference>
<dbReference type="Proteomes" id="UP000008824">
    <property type="component" value="Chromosome"/>
</dbReference>
<dbReference type="GO" id="GO:0005524">
    <property type="term" value="F:ATP binding"/>
    <property type="evidence" value="ECO:0007669"/>
    <property type="project" value="UniProtKB-KW"/>
</dbReference>
<dbReference type="GO" id="GO:0005525">
    <property type="term" value="F:GTP binding"/>
    <property type="evidence" value="ECO:0007669"/>
    <property type="project" value="UniProtKB-UniRule"/>
</dbReference>
<dbReference type="GO" id="GO:0003924">
    <property type="term" value="F:GTPase activity"/>
    <property type="evidence" value="ECO:0007669"/>
    <property type="project" value="InterPro"/>
</dbReference>
<dbReference type="GO" id="GO:0004781">
    <property type="term" value="F:sulfate adenylyltransferase (ATP) activity"/>
    <property type="evidence" value="ECO:0007669"/>
    <property type="project" value="UniProtKB-UniRule"/>
</dbReference>
<dbReference type="GO" id="GO:0070814">
    <property type="term" value="P:hydrogen sulfide biosynthetic process"/>
    <property type="evidence" value="ECO:0007669"/>
    <property type="project" value="UniProtKB-UniRule"/>
</dbReference>
<dbReference type="GO" id="GO:0000103">
    <property type="term" value="P:sulfate assimilation"/>
    <property type="evidence" value="ECO:0007669"/>
    <property type="project" value="UniProtKB-UniRule"/>
</dbReference>
<dbReference type="CDD" id="cd04166">
    <property type="entry name" value="CysN_ATPS"/>
    <property type="match status" value="1"/>
</dbReference>
<dbReference type="CDD" id="cd03695">
    <property type="entry name" value="CysN_NodQ_II"/>
    <property type="match status" value="1"/>
</dbReference>
<dbReference type="CDD" id="cd04095">
    <property type="entry name" value="CysN_NoDQ_III"/>
    <property type="match status" value="1"/>
</dbReference>
<dbReference type="FunFam" id="2.40.30.10:FF:000027">
    <property type="entry name" value="Sulfate adenylyltransferase subunit 1"/>
    <property type="match status" value="1"/>
</dbReference>
<dbReference type="FunFam" id="2.40.30.10:FF:000031">
    <property type="entry name" value="Sulfate adenylyltransferase subunit 1"/>
    <property type="match status" value="1"/>
</dbReference>
<dbReference type="FunFam" id="3.40.50.300:FF:000119">
    <property type="entry name" value="Sulfate adenylyltransferase subunit 1"/>
    <property type="match status" value="1"/>
</dbReference>
<dbReference type="Gene3D" id="3.40.50.300">
    <property type="entry name" value="P-loop containing nucleotide triphosphate hydrolases"/>
    <property type="match status" value="1"/>
</dbReference>
<dbReference type="Gene3D" id="2.40.30.10">
    <property type="entry name" value="Translation factors"/>
    <property type="match status" value="2"/>
</dbReference>
<dbReference type="HAMAP" id="MF_00062">
    <property type="entry name" value="Sulf_adenylyltr_sub1"/>
    <property type="match status" value="1"/>
</dbReference>
<dbReference type="InterPro" id="IPR041757">
    <property type="entry name" value="CysN_GTP-bd"/>
</dbReference>
<dbReference type="InterPro" id="IPR044138">
    <property type="entry name" value="CysN_II"/>
</dbReference>
<dbReference type="InterPro" id="IPR044139">
    <property type="entry name" value="CysN_NoDQ_III"/>
</dbReference>
<dbReference type="InterPro" id="IPR031157">
    <property type="entry name" value="G_TR_CS"/>
</dbReference>
<dbReference type="InterPro" id="IPR054696">
    <property type="entry name" value="GTP-eEF1A_C"/>
</dbReference>
<dbReference type="InterPro" id="IPR027417">
    <property type="entry name" value="P-loop_NTPase"/>
</dbReference>
<dbReference type="InterPro" id="IPR005225">
    <property type="entry name" value="Small_GTP-bd"/>
</dbReference>
<dbReference type="InterPro" id="IPR011779">
    <property type="entry name" value="SO4_adenylTrfase_lsu"/>
</dbReference>
<dbReference type="InterPro" id="IPR000795">
    <property type="entry name" value="T_Tr_GTP-bd_dom"/>
</dbReference>
<dbReference type="InterPro" id="IPR050100">
    <property type="entry name" value="TRAFAC_GTPase_members"/>
</dbReference>
<dbReference type="InterPro" id="IPR009000">
    <property type="entry name" value="Transl_B-barrel_sf"/>
</dbReference>
<dbReference type="InterPro" id="IPR009001">
    <property type="entry name" value="Transl_elong_EF1A/Init_IF2_C"/>
</dbReference>
<dbReference type="NCBIfam" id="TIGR02034">
    <property type="entry name" value="CysN"/>
    <property type="match status" value="1"/>
</dbReference>
<dbReference type="NCBIfam" id="NF003478">
    <property type="entry name" value="PRK05124.1"/>
    <property type="match status" value="1"/>
</dbReference>
<dbReference type="NCBIfam" id="TIGR00231">
    <property type="entry name" value="small_GTP"/>
    <property type="match status" value="1"/>
</dbReference>
<dbReference type="PANTHER" id="PTHR23115">
    <property type="entry name" value="TRANSLATION FACTOR"/>
    <property type="match status" value="1"/>
</dbReference>
<dbReference type="Pfam" id="PF22594">
    <property type="entry name" value="GTP-eEF1A_C"/>
    <property type="match status" value="1"/>
</dbReference>
<dbReference type="Pfam" id="PF00009">
    <property type="entry name" value="GTP_EFTU"/>
    <property type="match status" value="1"/>
</dbReference>
<dbReference type="PRINTS" id="PR00315">
    <property type="entry name" value="ELONGATNFCT"/>
</dbReference>
<dbReference type="SUPFAM" id="SSF50465">
    <property type="entry name" value="EF-Tu/eEF-1alpha/eIF2-gamma C-terminal domain"/>
    <property type="match status" value="1"/>
</dbReference>
<dbReference type="SUPFAM" id="SSF52540">
    <property type="entry name" value="P-loop containing nucleoside triphosphate hydrolases"/>
    <property type="match status" value="1"/>
</dbReference>
<dbReference type="SUPFAM" id="SSF50447">
    <property type="entry name" value="Translation proteins"/>
    <property type="match status" value="1"/>
</dbReference>
<dbReference type="PROSITE" id="PS00301">
    <property type="entry name" value="G_TR_1"/>
    <property type="match status" value="1"/>
</dbReference>
<dbReference type="PROSITE" id="PS51722">
    <property type="entry name" value="G_TR_2"/>
    <property type="match status" value="1"/>
</dbReference>
<sequence length="479" mass="53126">MNTILAQQIANEGGVEAWMMAQQHKSLLRFLTCGSVDDGKSTLIGRLLHDTLQIYEDQLSSLHNDSKRHGTQGEKLDLALLVDGLQAEREQGITIDVAYRYFSTEKRKFIIADTPGHEQYTRNMATGASTCDLAILLIDARKGVLDQTRRHSFISTLLGIKHLVVAINKMDLVDYREETFARIREDYLTFAEQLPGDLDIRFVPLSALEGDNVAAQSANMRWHSGPTLLEVLETVDIQRAVDRQPMRFPVQYVNRPNLDFRGYAGTLASGSVKVGERIKVLPSGVESSVARIVTFDGDKEEACAGEAITLVLNDDIDISRGDLLLAANETLAPARHAAIDVVWMAEQPLAPGQSYDVKLAGKKTRARIEAIRYQIDINNLTQRDVESLPLNGIGLVEMTFDEPLALDIYQQNPVTGGLIFIDRLSNVTVGAGMVRELDERGATPPVEYSAFELELNALVRRHFPHWDARDLLGDKHGAA</sequence>
<keyword id="KW-0067">ATP-binding</keyword>
<keyword id="KW-0342">GTP-binding</keyword>
<keyword id="KW-0547">Nucleotide-binding</keyword>
<keyword id="KW-0548">Nucleotidyltransferase</keyword>
<keyword id="KW-0808">Transferase</keyword>
<organism>
    <name type="scientific">Salmonella newport (strain SL254)</name>
    <dbReference type="NCBI Taxonomy" id="423368"/>
    <lineage>
        <taxon>Bacteria</taxon>
        <taxon>Pseudomonadati</taxon>
        <taxon>Pseudomonadota</taxon>
        <taxon>Gammaproteobacteria</taxon>
        <taxon>Enterobacterales</taxon>
        <taxon>Enterobacteriaceae</taxon>
        <taxon>Salmonella</taxon>
    </lineage>
</organism>
<gene>
    <name evidence="2" type="primary">cysN</name>
    <name type="ordered locus">SNSL254_A3140</name>
</gene>
<proteinExistence type="inferred from homology"/>
<name>CYSN_SALNS</name>
<comment type="function">
    <text evidence="2">With CysD forms the ATP sulfurylase (ATPS) that catalyzes the adenylation of sulfate producing adenosine 5'-phosphosulfate (APS) and diphosphate, the first enzymatic step in sulfur assimilation pathway. APS synthesis involves the formation of a high-energy phosphoric-sulfuric acid anhydride bond driven by GTP hydrolysis by CysN coupled to ATP hydrolysis by CysD.</text>
</comment>
<comment type="catalytic activity">
    <reaction evidence="2">
        <text>sulfate + ATP + H(+) = adenosine 5'-phosphosulfate + diphosphate</text>
        <dbReference type="Rhea" id="RHEA:18133"/>
        <dbReference type="ChEBI" id="CHEBI:15378"/>
        <dbReference type="ChEBI" id="CHEBI:16189"/>
        <dbReference type="ChEBI" id="CHEBI:30616"/>
        <dbReference type="ChEBI" id="CHEBI:33019"/>
        <dbReference type="ChEBI" id="CHEBI:58243"/>
        <dbReference type="EC" id="2.7.7.4"/>
    </reaction>
</comment>
<comment type="pathway">
    <text evidence="2">Sulfur metabolism; hydrogen sulfide biosynthesis; sulfite from sulfate: step 1/3.</text>
</comment>
<comment type="subunit">
    <text evidence="2">Heterodimer composed of CysD, the smaller subunit, and CysN.</text>
</comment>
<comment type="similarity">
    <text evidence="2">Belongs to the TRAFAC class translation factor GTPase superfamily. Classic translation factor GTPase family. CysN/NodQ subfamily.</text>
</comment>
<protein>
    <recommendedName>
        <fullName evidence="2">Sulfate adenylyltransferase subunit 1</fullName>
        <ecNumber evidence="2">2.7.7.4</ecNumber>
    </recommendedName>
    <alternativeName>
        <fullName evidence="2">ATP-sulfurylase large subunit</fullName>
    </alternativeName>
    <alternativeName>
        <fullName evidence="2">Sulfate adenylate transferase</fullName>
        <shortName evidence="2">SAT</shortName>
    </alternativeName>
</protein>
<accession>B4T461</accession>
<evidence type="ECO:0000250" key="1"/>
<evidence type="ECO:0000255" key="2">
    <source>
        <dbReference type="HAMAP-Rule" id="MF_00062"/>
    </source>
</evidence>